<name>GET1_CANGA</name>
<gene>
    <name evidence="1" type="primary">GET1</name>
    <name type="ordered locus">CAGL0A00253g</name>
</gene>
<accession>Q6FXV6</accession>
<sequence length="223" mass="25489">MSWVVAIAVVFVVVLKVLEYSTSYHDLVLQSLFFKNSPISVKFETLVKERRSIQEENKSISAQDNYAKWTKNNRKLDKLDKEITELGAQLKAHNEQIKGHLKKVKLLLLTVPFLCFKLWKGKHIVYNLPHHQMFPQLVAGVWSQGWLYLAILPLQLAKSIVTGSSFAIETASFPHMGVSLGIWLWALNSVISNIEFMTMQLWAKPVSKPSKKLEIVTDEIKVD</sequence>
<dbReference type="EMBL" id="CR380947">
    <property type="protein sequence ID" value="CAG57674.1"/>
    <property type="molecule type" value="Genomic_DNA"/>
</dbReference>
<dbReference type="RefSeq" id="XP_444783.1">
    <property type="nucleotide sequence ID" value="XM_444783.1"/>
</dbReference>
<dbReference type="SMR" id="Q6FXV6"/>
<dbReference type="FunCoup" id="Q6FXV6">
    <property type="interactions" value="46"/>
</dbReference>
<dbReference type="STRING" id="284593.Q6FXV6"/>
<dbReference type="EnsemblFungi" id="CAGL0A00253g-T">
    <property type="protein sequence ID" value="CAGL0A00253g-T-p1"/>
    <property type="gene ID" value="CAGL0A00253g"/>
</dbReference>
<dbReference type="KEGG" id="cgr:2886439"/>
<dbReference type="CGD" id="CAL0126877">
    <property type="gene designation" value="CAGL0A00253g"/>
</dbReference>
<dbReference type="VEuPathDB" id="FungiDB:B1J91_A00253g"/>
<dbReference type="VEuPathDB" id="FungiDB:CAGL0A00253g"/>
<dbReference type="eggNOG" id="KOG4253">
    <property type="taxonomic scope" value="Eukaryota"/>
</dbReference>
<dbReference type="HOGENOM" id="CLU_089418_2_1_1"/>
<dbReference type="InParanoid" id="Q6FXV6"/>
<dbReference type="OMA" id="AQDNYAR"/>
<dbReference type="Proteomes" id="UP000002428">
    <property type="component" value="Chromosome A"/>
</dbReference>
<dbReference type="GO" id="GO:0005789">
    <property type="term" value="C:endoplasmic reticulum membrane"/>
    <property type="evidence" value="ECO:0007669"/>
    <property type="project" value="UniProtKB-SubCell"/>
</dbReference>
<dbReference type="GO" id="GO:0043529">
    <property type="term" value="C:GET complex"/>
    <property type="evidence" value="ECO:0007669"/>
    <property type="project" value="UniProtKB-UniRule"/>
</dbReference>
<dbReference type="GO" id="GO:0000139">
    <property type="term" value="C:Golgi membrane"/>
    <property type="evidence" value="ECO:0007669"/>
    <property type="project" value="UniProtKB-SubCell"/>
</dbReference>
<dbReference type="GO" id="GO:0032977">
    <property type="term" value="F:membrane insertase activity"/>
    <property type="evidence" value="ECO:0007669"/>
    <property type="project" value="EnsemblFungi"/>
</dbReference>
<dbReference type="GO" id="GO:0008320">
    <property type="term" value="F:protein transmembrane transporter activity"/>
    <property type="evidence" value="ECO:0007669"/>
    <property type="project" value="EnsemblFungi"/>
</dbReference>
<dbReference type="GO" id="GO:0043495">
    <property type="term" value="F:protein-membrane adaptor activity"/>
    <property type="evidence" value="ECO:0007669"/>
    <property type="project" value="EnsemblFungi"/>
</dbReference>
<dbReference type="GO" id="GO:0097051">
    <property type="term" value="P:establishment of protein localization to endoplasmic reticulum membrane"/>
    <property type="evidence" value="ECO:0007669"/>
    <property type="project" value="EnsemblFungi"/>
</dbReference>
<dbReference type="GO" id="GO:0000423">
    <property type="term" value="P:mitophagy"/>
    <property type="evidence" value="ECO:0007669"/>
    <property type="project" value="EnsemblFungi"/>
</dbReference>
<dbReference type="GO" id="GO:0006890">
    <property type="term" value="P:retrograde vesicle-mediated transport, Golgi to endoplasmic reticulum"/>
    <property type="evidence" value="ECO:0007669"/>
    <property type="project" value="EnsemblFungi"/>
</dbReference>
<dbReference type="GO" id="GO:0071816">
    <property type="term" value="P:tail-anchored membrane protein insertion into ER membrane"/>
    <property type="evidence" value="ECO:0007669"/>
    <property type="project" value="EnsemblFungi"/>
</dbReference>
<dbReference type="Gene3D" id="1.10.287.660">
    <property type="entry name" value="Helix hairpin bin"/>
    <property type="match status" value="1"/>
</dbReference>
<dbReference type="HAMAP" id="MF_03113">
    <property type="entry name" value="Get1"/>
    <property type="match status" value="1"/>
</dbReference>
<dbReference type="InterPro" id="IPR028945">
    <property type="entry name" value="Get1"/>
</dbReference>
<dbReference type="InterPro" id="IPR027538">
    <property type="entry name" value="Get1_fungi"/>
</dbReference>
<dbReference type="InterPro" id="IPR029012">
    <property type="entry name" value="Helix_hairpin_bin_sf"/>
</dbReference>
<dbReference type="PANTHER" id="PTHR42650:SF1">
    <property type="entry name" value="GUIDED ENTRY OF TAIL-ANCHORED PROTEINS FACTOR 1"/>
    <property type="match status" value="1"/>
</dbReference>
<dbReference type="PANTHER" id="PTHR42650">
    <property type="entry name" value="TAIL-ANCHORED PROTEIN INSERTION RECEPTOR WRB"/>
    <property type="match status" value="1"/>
</dbReference>
<dbReference type="Pfam" id="PF04420">
    <property type="entry name" value="CHD5"/>
    <property type="match status" value="1"/>
</dbReference>
<organism>
    <name type="scientific">Candida glabrata (strain ATCC 2001 / BCRC 20586 / JCM 3761 / NBRC 0622 / NRRL Y-65 / CBS 138)</name>
    <name type="common">Yeast</name>
    <name type="synonym">Nakaseomyces glabratus</name>
    <dbReference type="NCBI Taxonomy" id="284593"/>
    <lineage>
        <taxon>Eukaryota</taxon>
        <taxon>Fungi</taxon>
        <taxon>Dikarya</taxon>
        <taxon>Ascomycota</taxon>
        <taxon>Saccharomycotina</taxon>
        <taxon>Saccharomycetes</taxon>
        <taxon>Saccharomycetales</taxon>
        <taxon>Saccharomycetaceae</taxon>
        <taxon>Nakaseomyces</taxon>
    </lineage>
</organism>
<comment type="function">
    <text evidence="1">Required for the post-translational delivery of tail-anchored (TA) proteins to the endoplasmic reticulum. Together with GET2, acts as a membrane receptor for soluble GET3, which recognizes and selectively binds the transmembrane domain of TA proteins in the cytosol. The GET complex cooperates with the HDEL receptor ERD2 to mediate the ATP-dependent retrieval of resident ER proteins that contain a C-terminal H-D-E-L retention signal from the Golgi to the ER.</text>
</comment>
<comment type="subunit">
    <text evidence="1">Component of the Golgi to ER traffic (GET) complex, which is composed of GET1, GET2 and GET3. Within the complex, GET1 and GET2 form a heterotetramer which is stabilized by phosphatidylinositol binding and which binds to the GET3 homodimer.</text>
</comment>
<comment type="subcellular location">
    <subcellularLocation>
        <location evidence="1">Endoplasmic reticulum membrane</location>
        <topology evidence="1">Multi-pass membrane protein</topology>
    </subcellularLocation>
    <subcellularLocation>
        <location evidence="1">Golgi apparatus membrane</location>
        <topology evidence="1">Multi-pass membrane protein</topology>
    </subcellularLocation>
</comment>
<comment type="similarity">
    <text evidence="1">Belongs to the WRB/GET1 family.</text>
</comment>
<reference key="1">
    <citation type="journal article" date="2004" name="Nature">
        <title>Genome evolution in yeasts.</title>
        <authorList>
            <person name="Dujon B."/>
            <person name="Sherman D."/>
            <person name="Fischer G."/>
            <person name="Durrens P."/>
            <person name="Casaregola S."/>
            <person name="Lafontaine I."/>
            <person name="de Montigny J."/>
            <person name="Marck C."/>
            <person name="Neuveglise C."/>
            <person name="Talla E."/>
            <person name="Goffard N."/>
            <person name="Frangeul L."/>
            <person name="Aigle M."/>
            <person name="Anthouard V."/>
            <person name="Babour A."/>
            <person name="Barbe V."/>
            <person name="Barnay S."/>
            <person name="Blanchin S."/>
            <person name="Beckerich J.-M."/>
            <person name="Beyne E."/>
            <person name="Bleykasten C."/>
            <person name="Boisrame A."/>
            <person name="Boyer J."/>
            <person name="Cattolico L."/>
            <person name="Confanioleri F."/>
            <person name="de Daruvar A."/>
            <person name="Despons L."/>
            <person name="Fabre E."/>
            <person name="Fairhead C."/>
            <person name="Ferry-Dumazet H."/>
            <person name="Groppi A."/>
            <person name="Hantraye F."/>
            <person name="Hennequin C."/>
            <person name="Jauniaux N."/>
            <person name="Joyet P."/>
            <person name="Kachouri R."/>
            <person name="Kerrest A."/>
            <person name="Koszul R."/>
            <person name="Lemaire M."/>
            <person name="Lesur I."/>
            <person name="Ma L."/>
            <person name="Muller H."/>
            <person name="Nicaud J.-M."/>
            <person name="Nikolski M."/>
            <person name="Oztas S."/>
            <person name="Ozier-Kalogeropoulos O."/>
            <person name="Pellenz S."/>
            <person name="Potier S."/>
            <person name="Richard G.-F."/>
            <person name="Straub M.-L."/>
            <person name="Suleau A."/>
            <person name="Swennen D."/>
            <person name="Tekaia F."/>
            <person name="Wesolowski-Louvel M."/>
            <person name="Westhof E."/>
            <person name="Wirth B."/>
            <person name="Zeniou-Meyer M."/>
            <person name="Zivanovic Y."/>
            <person name="Bolotin-Fukuhara M."/>
            <person name="Thierry A."/>
            <person name="Bouchier C."/>
            <person name="Caudron B."/>
            <person name="Scarpelli C."/>
            <person name="Gaillardin C."/>
            <person name="Weissenbach J."/>
            <person name="Wincker P."/>
            <person name="Souciet J.-L."/>
        </authorList>
    </citation>
    <scope>NUCLEOTIDE SEQUENCE [LARGE SCALE GENOMIC DNA]</scope>
    <source>
        <strain>ATCC 2001 / BCRC 20586 / JCM 3761 / NBRC 0622 / NRRL Y-65 / CBS 138</strain>
    </source>
</reference>
<evidence type="ECO:0000255" key="1">
    <source>
        <dbReference type="HAMAP-Rule" id="MF_03113"/>
    </source>
</evidence>
<feature type="chain" id="PRO_0000388585" description="Golgi to ER traffic protein 1">
    <location>
        <begin position="1"/>
        <end position="223"/>
    </location>
</feature>
<feature type="topological domain" description="Lumenal" evidence="1">
    <location>
        <position position="1"/>
    </location>
</feature>
<feature type="transmembrane region" description="Helical" evidence="1">
    <location>
        <begin position="2"/>
        <end position="21"/>
    </location>
</feature>
<feature type="topological domain" description="Cytoplasmic" evidence="1">
    <location>
        <begin position="22"/>
        <end position="105"/>
    </location>
</feature>
<feature type="transmembrane region" description="Helical" evidence="1">
    <location>
        <begin position="106"/>
        <end position="126"/>
    </location>
</feature>
<feature type="topological domain" description="Lumenal" evidence="1">
    <location>
        <begin position="127"/>
        <end position="177"/>
    </location>
</feature>
<feature type="transmembrane region" description="Helical" evidence="1">
    <location>
        <begin position="178"/>
        <end position="194"/>
    </location>
</feature>
<feature type="topological domain" description="Cytoplasmic" evidence="1">
    <location>
        <begin position="195"/>
        <end position="223"/>
    </location>
</feature>
<feature type="coiled-coil region" evidence="1">
    <location>
        <begin position="56"/>
        <end position="105"/>
    </location>
</feature>
<proteinExistence type="inferred from homology"/>
<protein>
    <recommendedName>
        <fullName evidence="1">Golgi to ER traffic protein 1</fullName>
    </recommendedName>
    <alternativeName>
        <fullName evidence="1">Guided entry of tail-anchored proteins 1</fullName>
    </alternativeName>
</protein>
<keyword id="KW-0175">Coiled coil</keyword>
<keyword id="KW-0256">Endoplasmic reticulum</keyword>
<keyword id="KW-0931">ER-Golgi transport</keyword>
<keyword id="KW-0333">Golgi apparatus</keyword>
<keyword id="KW-0472">Membrane</keyword>
<keyword id="KW-1185">Reference proteome</keyword>
<keyword id="KW-0812">Transmembrane</keyword>
<keyword id="KW-1133">Transmembrane helix</keyword>
<keyword id="KW-0813">Transport</keyword>